<keyword id="KW-0007">Acetylation</keyword>
<keyword id="KW-0025">Alternative splicing</keyword>
<keyword id="KW-0647">Proteasome</keyword>
<keyword id="KW-1185">Reference proteome</keyword>
<name>PSD7B_ARATH</name>
<reference key="1">
    <citation type="journal article" date="2004" name="J. Biol. Chem.">
        <title>Purification of the Arabidopsis 26 S proteasome: biochemical and molecular analyses revealed the presence of multiple isoforms.</title>
        <authorList>
            <person name="Yang P."/>
            <person name="Fu H."/>
            <person name="Walker J."/>
            <person name="Papa C.M."/>
            <person name="Smalle J."/>
            <person name="Ju Y.-M."/>
            <person name="Vierstra R.D."/>
        </authorList>
    </citation>
    <scope>NUCLEOTIDE SEQUENCE [MRNA]</scope>
    <scope>SUBUNIT</scope>
    <scope>IDENTIFICATION BY MASS SPECTROMETRY</scope>
    <source>
        <strain>cv. Columbia</strain>
    </source>
</reference>
<reference key="2">
    <citation type="journal article" date="2000" name="Nature">
        <title>Sequence and analysis of chromosome 3 of the plant Arabidopsis thaliana.</title>
        <authorList>
            <person name="Salanoubat M."/>
            <person name="Lemcke K."/>
            <person name="Rieger M."/>
            <person name="Ansorge W."/>
            <person name="Unseld M."/>
            <person name="Fartmann B."/>
            <person name="Valle G."/>
            <person name="Bloecker H."/>
            <person name="Perez-Alonso M."/>
            <person name="Obermaier B."/>
            <person name="Delseny M."/>
            <person name="Boutry M."/>
            <person name="Grivell L.A."/>
            <person name="Mache R."/>
            <person name="Puigdomenech P."/>
            <person name="De Simone V."/>
            <person name="Choisne N."/>
            <person name="Artiguenave F."/>
            <person name="Robert C."/>
            <person name="Brottier P."/>
            <person name="Wincker P."/>
            <person name="Cattolico L."/>
            <person name="Weissenbach J."/>
            <person name="Saurin W."/>
            <person name="Quetier F."/>
            <person name="Schaefer M."/>
            <person name="Mueller-Auer S."/>
            <person name="Gabel C."/>
            <person name="Fuchs M."/>
            <person name="Benes V."/>
            <person name="Wurmbach E."/>
            <person name="Drzonek H."/>
            <person name="Erfle H."/>
            <person name="Jordan N."/>
            <person name="Bangert S."/>
            <person name="Wiedelmann R."/>
            <person name="Kranz H."/>
            <person name="Voss H."/>
            <person name="Holland R."/>
            <person name="Brandt P."/>
            <person name="Nyakatura G."/>
            <person name="Vezzi A."/>
            <person name="D'Angelo M."/>
            <person name="Pallavicini A."/>
            <person name="Toppo S."/>
            <person name="Simionati B."/>
            <person name="Conrad A."/>
            <person name="Hornischer K."/>
            <person name="Kauer G."/>
            <person name="Loehnert T.-H."/>
            <person name="Nordsiek G."/>
            <person name="Reichelt J."/>
            <person name="Scharfe M."/>
            <person name="Schoen O."/>
            <person name="Bargues M."/>
            <person name="Terol J."/>
            <person name="Climent J."/>
            <person name="Navarro P."/>
            <person name="Collado C."/>
            <person name="Perez-Perez A."/>
            <person name="Ottenwaelder B."/>
            <person name="Duchemin D."/>
            <person name="Cooke R."/>
            <person name="Laudie M."/>
            <person name="Berger-Llauro C."/>
            <person name="Purnelle B."/>
            <person name="Masuy D."/>
            <person name="de Haan M."/>
            <person name="Maarse A.C."/>
            <person name="Alcaraz J.-P."/>
            <person name="Cottet A."/>
            <person name="Casacuberta E."/>
            <person name="Monfort A."/>
            <person name="Argiriou A."/>
            <person name="Flores M."/>
            <person name="Liguori R."/>
            <person name="Vitale D."/>
            <person name="Mannhaupt G."/>
            <person name="Haase D."/>
            <person name="Schoof H."/>
            <person name="Rudd S."/>
            <person name="Zaccaria P."/>
            <person name="Mewes H.-W."/>
            <person name="Mayer K.F.X."/>
            <person name="Kaul S."/>
            <person name="Town C.D."/>
            <person name="Koo H.L."/>
            <person name="Tallon L.J."/>
            <person name="Jenkins J."/>
            <person name="Rooney T."/>
            <person name="Rizzo M."/>
            <person name="Walts A."/>
            <person name="Utterback T."/>
            <person name="Fujii C.Y."/>
            <person name="Shea T.P."/>
            <person name="Creasy T.H."/>
            <person name="Haas B."/>
            <person name="Maiti R."/>
            <person name="Wu D."/>
            <person name="Peterson J."/>
            <person name="Van Aken S."/>
            <person name="Pai G."/>
            <person name="Militscher J."/>
            <person name="Sellers P."/>
            <person name="Gill J.E."/>
            <person name="Feldblyum T.V."/>
            <person name="Preuss D."/>
            <person name="Lin X."/>
            <person name="Nierman W.C."/>
            <person name="Salzberg S.L."/>
            <person name="White O."/>
            <person name="Venter J.C."/>
            <person name="Fraser C.M."/>
            <person name="Kaneko T."/>
            <person name="Nakamura Y."/>
            <person name="Sato S."/>
            <person name="Kato T."/>
            <person name="Asamizu E."/>
            <person name="Sasamoto S."/>
            <person name="Kimura T."/>
            <person name="Idesawa K."/>
            <person name="Kawashima K."/>
            <person name="Kishida Y."/>
            <person name="Kiyokawa C."/>
            <person name="Kohara M."/>
            <person name="Matsumoto M."/>
            <person name="Matsuno A."/>
            <person name="Muraki A."/>
            <person name="Nakayama S."/>
            <person name="Nakazaki N."/>
            <person name="Shinpo S."/>
            <person name="Takeuchi C."/>
            <person name="Wada T."/>
            <person name="Watanabe A."/>
            <person name="Yamada M."/>
            <person name="Yasuda M."/>
            <person name="Tabata S."/>
        </authorList>
    </citation>
    <scope>NUCLEOTIDE SEQUENCE [LARGE SCALE GENOMIC DNA]</scope>
    <source>
        <strain>cv. Columbia</strain>
    </source>
</reference>
<reference key="3">
    <citation type="journal article" date="2017" name="Plant J.">
        <title>Araport11: a complete reannotation of the Arabidopsis thaliana reference genome.</title>
        <authorList>
            <person name="Cheng C.Y."/>
            <person name="Krishnakumar V."/>
            <person name="Chan A.P."/>
            <person name="Thibaud-Nissen F."/>
            <person name="Schobel S."/>
            <person name="Town C.D."/>
        </authorList>
    </citation>
    <scope>GENOME REANNOTATION</scope>
    <source>
        <strain>cv. Columbia</strain>
    </source>
</reference>
<reference key="4">
    <citation type="submission" date="2006-07" db="EMBL/GenBank/DDBJ databases">
        <title>Large-scale analysis of RIKEN Arabidopsis full-length (RAFL) cDNAs.</title>
        <authorList>
            <person name="Totoki Y."/>
            <person name="Seki M."/>
            <person name="Ishida J."/>
            <person name="Nakajima M."/>
            <person name="Enju A."/>
            <person name="Kamiya A."/>
            <person name="Narusaka M."/>
            <person name="Shin-i T."/>
            <person name="Nakagawa M."/>
            <person name="Sakamoto N."/>
            <person name="Oishi K."/>
            <person name="Kohara Y."/>
            <person name="Kobayashi M."/>
            <person name="Toyoda A."/>
            <person name="Sakaki Y."/>
            <person name="Sakurai T."/>
            <person name="Iida K."/>
            <person name="Akiyama K."/>
            <person name="Satou M."/>
            <person name="Toyoda T."/>
            <person name="Konagaya A."/>
            <person name="Carninci P."/>
            <person name="Kawai J."/>
            <person name="Hayashizaki Y."/>
            <person name="Shinozaki K."/>
        </authorList>
    </citation>
    <scope>NUCLEOTIDE SEQUENCE [LARGE SCALE MRNA]</scope>
    <source>
        <strain>cv. Columbia</strain>
    </source>
</reference>
<reference key="5">
    <citation type="journal article" date="2010" name="J. Biol. Chem.">
        <title>Affinity purification of the Arabidopsis 26 S proteasome reveals a diverse array of plant proteolytic complexes.</title>
        <authorList>
            <person name="Book A.J."/>
            <person name="Gladman N.P."/>
            <person name="Lee S.S."/>
            <person name="Scalf M."/>
            <person name="Smith L.M."/>
            <person name="Vierstra R.D."/>
        </authorList>
    </citation>
    <scope>IDENTIFICATION BY MASS SPECTROMETRY</scope>
    <scope>CHARACTERIZATION OF THE 26S PROTEASOME COMPLEX</scope>
    <scope>SUBUNIT</scope>
    <scope>ACETYLATION AT MET-1</scope>
</reference>
<accession>Q9C774</accession>
<proteinExistence type="evidence at protein level"/>
<dbReference type="EMBL" id="AY258412">
    <property type="protein sequence ID" value="AAP83300.1"/>
    <property type="molecule type" value="mRNA"/>
</dbReference>
<dbReference type="EMBL" id="AC073395">
    <property type="protein sequence ID" value="AAG50979.1"/>
    <property type="molecule type" value="Genomic_DNA"/>
</dbReference>
<dbReference type="EMBL" id="CP002686">
    <property type="protein sequence ID" value="AEE75022.1"/>
    <property type="molecule type" value="Genomic_DNA"/>
</dbReference>
<dbReference type="EMBL" id="AK228032">
    <property type="protein sequence ID" value="BAE99993.1"/>
    <property type="molecule type" value="mRNA"/>
</dbReference>
<dbReference type="RefSeq" id="NP_187736.1">
    <molecule id="Q9C774-1"/>
    <property type="nucleotide sequence ID" value="NM_111962.5"/>
</dbReference>
<dbReference type="SMR" id="Q9C774"/>
<dbReference type="BioGRID" id="5632">
    <property type="interactions" value="91"/>
</dbReference>
<dbReference type="FunCoup" id="Q9C774">
    <property type="interactions" value="4186"/>
</dbReference>
<dbReference type="IntAct" id="Q9C774">
    <property type="interactions" value="15"/>
</dbReference>
<dbReference type="STRING" id="3702.Q9C774"/>
<dbReference type="MEROPS" id="M67.973"/>
<dbReference type="iPTMnet" id="Q9C774"/>
<dbReference type="PaxDb" id="3702-AT3G11270.1"/>
<dbReference type="DNASU" id="820298"/>
<dbReference type="EnsemblPlants" id="AT3G11270.1">
    <molecule id="Q9C774-1"/>
    <property type="protein sequence ID" value="AT3G11270.1"/>
    <property type="gene ID" value="AT3G11270"/>
</dbReference>
<dbReference type="GeneID" id="820298"/>
<dbReference type="Gramene" id="AT3G11270.1">
    <molecule id="Q9C774-1"/>
    <property type="protein sequence ID" value="AT3G11270.1"/>
    <property type="gene ID" value="AT3G11270"/>
</dbReference>
<dbReference type="KEGG" id="ath:AT3G11270"/>
<dbReference type="Araport" id="AT3G11270"/>
<dbReference type="TAIR" id="AT3G11270">
    <property type="gene designation" value="MEE34"/>
</dbReference>
<dbReference type="eggNOG" id="KOG1556">
    <property type="taxonomic scope" value="Eukaryota"/>
</dbReference>
<dbReference type="HOGENOM" id="CLU_027018_3_0_1"/>
<dbReference type="InParanoid" id="Q9C774"/>
<dbReference type="OrthoDB" id="10256771at2759"/>
<dbReference type="PhylomeDB" id="Q9C774"/>
<dbReference type="PRO" id="PR:Q9C774"/>
<dbReference type="Proteomes" id="UP000006548">
    <property type="component" value="Chromosome 3"/>
</dbReference>
<dbReference type="ExpressionAtlas" id="Q9C774">
    <property type="expression patterns" value="baseline and differential"/>
</dbReference>
<dbReference type="GO" id="GO:0005829">
    <property type="term" value="C:cytosol"/>
    <property type="evidence" value="ECO:0000314"/>
    <property type="project" value="TAIR"/>
</dbReference>
<dbReference type="GO" id="GO:0005634">
    <property type="term" value="C:nucleus"/>
    <property type="evidence" value="ECO:0000304"/>
    <property type="project" value="TAIR"/>
</dbReference>
<dbReference type="GO" id="GO:0000502">
    <property type="term" value="C:proteasome complex"/>
    <property type="evidence" value="ECO:0000314"/>
    <property type="project" value="TAIR"/>
</dbReference>
<dbReference type="GO" id="GO:0005838">
    <property type="term" value="C:proteasome regulatory particle"/>
    <property type="evidence" value="ECO:0007669"/>
    <property type="project" value="InterPro"/>
</dbReference>
<dbReference type="GO" id="GO:0008237">
    <property type="term" value="F:metallopeptidase activity"/>
    <property type="evidence" value="ECO:0007669"/>
    <property type="project" value="InterPro"/>
</dbReference>
<dbReference type="GO" id="GO:0009793">
    <property type="term" value="P:embryo development ending in seed dormancy"/>
    <property type="evidence" value="ECO:0000315"/>
    <property type="project" value="TAIR"/>
</dbReference>
<dbReference type="GO" id="GO:0030163">
    <property type="term" value="P:protein catabolic process"/>
    <property type="evidence" value="ECO:0000304"/>
    <property type="project" value="TAIR"/>
</dbReference>
<dbReference type="GO" id="GO:0006364">
    <property type="term" value="P:rRNA processing"/>
    <property type="evidence" value="ECO:0000315"/>
    <property type="project" value="TAIR"/>
</dbReference>
<dbReference type="CDD" id="cd08062">
    <property type="entry name" value="MPN_RPN7_8"/>
    <property type="match status" value="1"/>
</dbReference>
<dbReference type="FunFam" id="3.40.140.10:FF:000013">
    <property type="entry name" value="26S proteasome non-ATPase regulatory subunit 7"/>
    <property type="match status" value="1"/>
</dbReference>
<dbReference type="Gene3D" id="3.40.140.10">
    <property type="entry name" value="Cytidine Deaminase, domain 2"/>
    <property type="match status" value="1"/>
</dbReference>
<dbReference type="InterPro" id="IPR024969">
    <property type="entry name" value="EIF3F/CSN6-like_C"/>
</dbReference>
<dbReference type="InterPro" id="IPR000555">
    <property type="entry name" value="JAMM/MPN+_dom"/>
</dbReference>
<dbReference type="InterPro" id="IPR037518">
    <property type="entry name" value="MPN"/>
</dbReference>
<dbReference type="InterPro" id="IPR033858">
    <property type="entry name" value="MPN_RPN7_8"/>
</dbReference>
<dbReference type="PANTHER" id="PTHR10540:SF7">
    <property type="entry name" value="26S PROTEASOME NON-ATPASE REGULATORY SUBUNIT 7"/>
    <property type="match status" value="1"/>
</dbReference>
<dbReference type="PANTHER" id="PTHR10540">
    <property type="entry name" value="EUKARYOTIC TRANSLATION INITIATION FACTOR 3 SUBUNIT F-RELATED"/>
    <property type="match status" value="1"/>
</dbReference>
<dbReference type="Pfam" id="PF01398">
    <property type="entry name" value="JAB"/>
    <property type="match status" value="1"/>
</dbReference>
<dbReference type="Pfam" id="PF13012">
    <property type="entry name" value="MitMem_reg"/>
    <property type="match status" value="1"/>
</dbReference>
<dbReference type="SMART" id="SM00232">
    <property type="entry name" value="JAB_MPN"/>
    <property type="match status" value="1"/>
</dbReference>
<dbReference type="PROSITE" id="PS50249">
    <property type="entry name" value="MPN"/>
    <property type="match status" value="1"/>
</dbReference>
<organism>
    <name type="scientific">Arabidopsis thaliana</name>
    <name type="common">Mouse-ear cress</name>
    <dbReference type="NCBI Taxonomy" id="3702"/>
    <lineage>
        <taxon>Eukaryota</taxon>
        <taxon>Viridiplantae</taxon>
        <taxon>Streptophyta</taxon>
        <taxon>Embryophyta</taxon>
        <taxon>Tracheophyta</taxon>
        <taxon>Spermatophyta</taxon>
        <taxon>Magnoliopsida</taxon>
        <taxon>eudicotyledons</taxon>
        <taxon>Gunneridae</taxon>
        <taxon>Pentapetalae</taxon>
        <taxon>rosids</taxon>
        <taxon>malvids</taxon>
        <taxon>Brassicales</taxon>
        <taxon>Brassicaceae</taxon>
        <taxon>Camelineae</taxon>
        <taxon>Arabidopsis</taxon>
    </lineage>
</organism>
<gene>
    <name type="primary">RPN8B</name>
    <name type="synonym">MEE34</name>
    <name type="ordered locus">At3g11270</name>
    <name type="ORF">F11B9.19</name>
</gene>
<comment type="function">
    <text evidence="1">Acts as a regulatory subunit of the 26S proteasome which is involved in the ATP-dependent degradation of ubiquitinated proteins.</text>
</comment>
<comment type="subunit">
    <text evidence="3 4">Component of the 19S regulatory particle (RP/PA700) lid subcomplex of the 26S proteasome. The 26S proteasome is composed of a core protease (CP), known as the 20S proteasome, capped at one or both ends by the 19S regulatory particle (RP/PA700). The RP/PA700 complex is composed of at least 17 different subunits in two subcomplexes, the base and the lid, which form the portions proximal and distal to the 20S proteolytic core, respectively.</text>
</comment>
<comment type="alternative products">
    <event type="alternative splicing"/>
    <isoform>
        <id>Q9C774-1</id>
        <name>1</name>
        <sequence type="displayed"/>
    </isoform>
    <text>A number of isoforms are produced. According to EST sequences.</text>
</comment>
<comment type="similarity">
    <text evidence="5">Belongs to the peptidase M67A family.</text>
</comment>
<protein>
    <recommendedName>
        <fullName>26S proteasome non-ATPase regulatory subunit 7 homolog B</fullName>
    </recommendedName>
    <alternativeName>
        <fullName>26S proteasome regulatory subunit RPN8b</fullName>
        <shortName>AtRPN8b</shortName>
    </alternativeName>
    <alternativeName>
        <fullName>Protein MATERNAL EFFECT EMBRYO ARREST 34</fullName>
    </alternativeName>
</protein>
<sequence>MDVIKTQQISARTIEKVIVHPLVLLSIVDHYNRVAKDTSKRVVGVLLGSSSRGTVDVTNSYAVPFEEDDKDTSIWFLDHNYHESMFHMFKRINAKEHIVGWYSTGPKLRENDLDVHALFNGYVPNPVLVIIDVQPKELGIPTKAYYAVEEVKENATQKSQQVFVHVPTEIAAHEVEEIGVEHLLRDVKDTTISTLATEVTAKLTALKGLDARLREIRTYLDLVIEGKLPLNHEILYHLQDVFNLLPNLNVNELVKAFAVKTNDMMLVIYLSSLIRSVIALHSLINNKLLNKEHEKAEDSKPVDIPLITES</sequence>
<feature type="chain" id="PRO_0000423178" description="26S proteasome non-ATPase regulatory subunit 7 homolog B">
    <location>
        <begin position="1"/>
        <end position="310"/>
    </location>
</feature>
<feature type="domain" description="MPN" evidence="2">
    <location>
        <begin position="17"/>
        <end position="154"/>
    </location>
</feature>
<feature type="modified residue" description="N-acetylmethionine" evidence="4">
    <location>
        <position position="1"/>
    </location>
</feature>
<evidence type="ECO:0000250" key="1"/>
<evidence type="ECO:0000255" key="2">
    <source>
        <dbReference type="PROSITE-ProRule" id="PRU01182"/>
    </source>
</evidence>
<evidence type="ECO:0000269" key="3">
    <source>
    </source>
</evidence>
<evidence type="ECO:0000269" key="4">
    <source>
    </source>
</evidence>
<evidence type="ECO:0000305" key="5"/>